<evidence type="ECO:0000255" key="1">
    <source>
        <dbReference type="HAMAP-Rule" id="MF_00158"/>
    </source>
</evidence>
<feature type="chain" id="PRO_1000097045" description="Pantothenate synthetase">
    <location>
        <begin position="1"/>
        <end position="283"/>
    </location>
</feature>
<feature type="active site" description="Proton donor" evidence="1">
    <location>
        <position position="37"/>
    </location>
</feature>
<feature type="binding site" evidence="1">
    <location>
        <begin position="30"/>
        <end position="37"/>
    </location>
    <ligand>
        <name>ATP</name>
        <dbReference type="ChEBI" id="CHEBI:30616"/>
    </ligand>
</feature>
<feature type="binding site" evidence="1">
    <location>
        <position position="61"/>
    </location>
    <ligand>
        <name>(R)-pantoate</name>
        <dbReference type="ChEBI" id="CHEBI:15980"/>
    </ligand>
</feature>
<feature type="binding site" evidence="1">
    <location>
        <position position="61"/>
    </location>
    <ligand>
        <name>beta-alanine</name>
        <dbReference type="ChEBI" id="CHEBI:57966"/>
    </ligand>
</feature>
<feature type="binding site" evidence="1">
    <location>
        <begin position="147"/>
        <end position="150"/>
    </location>
    <ligand>
        <name>ATP</name>
        <dbReference type="ChEBI" id="CHEBI:30616"/>
    </ligand>
</feature>
<feature type="binding site" evidence="1">
    <location>
        <position position="153"/>
    </location>
    <ligand>
        <name>(R)-pantoate</name>
        <dbReference type="ChEBI" id="CHEBI:15980"/>
    </ligand>
</feature>
<feature type="binding site" evidence="1">
    <location>
        <position position="176"/>
    </location>
    <ligand>
        <name>ATP</name>
        <dbReference type="ChEBI" id="CHEBI:30616"/>
    </ligand>
</feature>
<feature type="binding site" evidence="1">
    <location>
        <begin position="184"/>
        <end position="187"/>
    </location>
    <ligand>
        <name>ATP</name>
        <dbReference type="ChEBI" id="CHEBI:30616"/>
    </ligand>
</feature>
<name>PANC_CHLL2</name>
<organism>
    <name type="scientific">Chlorobium limicola (strain DSM 245 / NBRC 103803 / 6330)</name>
    <dbReference type="NCBI Taxonomy" id="290315"/>
    <lineage>
        <taxon>Bacteria</taxon>
        <taxon>Pseudomonadati</taxon>
        <taxon>Chlorobiota</taxon>
        <taxon>Chlorobiia</taxon>
        <taxon>Chlorobiales</taxon>
        <taxon>Chlorobiaceae</taxon>
        <taxon>Chlorobium/Pelodictyon group</taxon>
        <taxon>Chlorobium</taxon>
    </lineage>
</organism>
<comment type="function">
    <text evidence="1">Catalyzes the condensation of pantoate with beta-alanine in an ATP-dependent reaction via a pantoyl-adenylate intermediate.</text>
</comment>
<comment type="catalytic activity">
    <reaction evidence="1">
        <text>(R)-pantoate + beta-alanine + ATP = (R)-pantothenate + AMP + diphosphate + H(+)</text>
        <dbReference type="Rhea" id="RHEA:10912"/>
        <dbReference type="ChEBI" id="CHEBI:15378"/>
        <dbReference type="ChEBI" id="CHEBI:15980"/>
        <dbReference type="ChEBI" id="CHEBI:29032"/>
        <dbReference type="ChEBI" id="CHEBI:30616"/>
        <dbReference type="ChEBI" id="CHEBI:33019"/>
        <dbReference type="ChEBI" id="CHEBI:57966"/>
        <dbReference type="ChEBI" id="CHEBI:456215"/>
        <dbReference type="EC" id="6.3.2.1"/>
    </reaction>
</comment>
<comment type="pathway">
    <text evidence="1">Cofactor biosynthesis; (R)-pantothenate biosynthesis; (R)-pantothenate from (R)-pantoate and beta-alanine: step 1/1.</text>
</comment>
<comment type="subunit">
    <text evidence="1">Homodimer.</text>
</comment>
<comment type="subcellular location">
    <subcellularLocation>
        <location evidence="1">Cytoplasm</location>
    </subcellularLocation>
</comment>
<comment type="miscellaneous">
    <text evidence="1">The reaction proceeds by a bi uni uni bi ping pong mechanism.</text>
</comment>
<comment type="similarity">
    <text evidence="1">Belongs to the pantothenate synthetase family.</text>
</comment>
<gene>
    <name evidence="1" type="primary">panC</name>
    <name type="ordered locus">Clim_0600</name>
</gene>
<dbReference type="EC" id="6.3.2.1" evidence="1"/>
<dbReference type="EMBL" id="CP001097">
    <property type="protein sequence ID" value="ACD89687.1"/>
    <property type="molecule type" value="Genomic_DNA"/>
</dbReference>
<dbReference type="RefSeq" id="WP_012465568.1">
    <property type="nucleotide sequence ID" value="NC_010803.1"/>
</dbReference>
<dbReference type="SMR" id="B3EH07"/>
<dbReference type="STRING" id="290315.Clim_0600"/>
<dbReference type="KEGG" id="cli:Clim_0600"/>
<dbReference type="eggNOG" id="COG0414">
    <property type="taxonomic scope" value="Bacteria"/>
</dbReference>
<dbReference type="HOGENOM" id="CLU_047148_0_0_10"/>
<dbReference type="OrthoDB" id="9773087at2"/>
<dbReference type="UniPathway" id="UPA00028">
    <property type="reaction ID" value="UER00005"/>
</dbReference>
<dbReference type="Proteomes" id="UP000008841">
    <property type="component" value="Chromosome"/>
</dbReference>
<dbReference type="GO" id="GO:0005829">
    <property type="term" value="C:cytosol"/>
    <property type="evidence" value="ECO:0007669"/>
    <property type="project" value="TreeGrafter"/>
</dbReference>
<dbReference type="GO" id="GO:0005524">
    <property type="term" value="F:ATP binding"/>
    <property type="evidence" value="ECO:0007669"/>
    <property type="project" value="UniProtKB-KW"/>
</dbReference>
<dbReference type="GO" id="GO:0004592">
    <property type="term" value="F:pantoate-beta-alanine ligase activity"/>
    <property type="evidence" value="ECO:0007669"/>
    <property type="project" value="UniProtKB-UniRule"/>
</dbReference>
<dbReference type="GO" id="GO:0015940">
    <property type="term" value="P:pantothenate biosynthetic process"/>
    <property type="evidence" value="ECO:0007669"/>
    <property type="project" value="UniProtKB-UniRule"/>
</dbReference>
<dbReference type="CDD" id="cd00560">
    <property type="entry name" value="PanC"/>
    <property type="match status" value="1"/>
</dbReference>
<dbReference type="FunFam" id="3.40.50.620:FF:000114">
    <property type="entry name" value="Pantothenate synthetase"/>
    <property type="match status" value="1"/>
</dbReference>
<dbReference type="Gene3D" id="3.40.50.620">
    <property type="entry name" value="HUPs"/>
    <property type="match status" value="1"/>
</dbReference>
<dbReference type="Gene3D" id="3.30.1300.10">
    <property type="entry name" value="Pantoate-beta-alanine ligase, C-terminal domain"/>
    <property type="match status" value="1"/>
</dbReference>
<dbReference type="HAMAP" id="MF_00158">
    <property type="entry name" value="PanC"/>
    <property type="match status" value="1"/>
</dbReference>
<dbReference type="InterPro" id="IPR004821">
    <property type="entry name" value="Cyt_trans-like"/>
</dbReference>
<dbReference type="InterPro" id="IPR003721">
    <property type="entry name" value="Pantoate_ligase"/>
</dbReference>
<dbReference type="InterPro" id="IPR042176">
    <property type="entry name" value="Pantoate_ligase_C"/>
</dbReference>
<dbReference type="InterPro" id="IPR014729">
    <property type="entry name" value="Rossmann-like_a/b/a_fold"/>
</dbReference>
<dbReference type="NCBIfam" id="TIGR00125">
    <property type="entry name" value="cyt_tran_rel"/>
    <property type="match status" value="1"/>
</dbReference>
<dbReference type="NCBIfam" id="TIGR00018">
    <property type="entry name" value="panC"/>
    <property type="match status" value="1"/>
</dbReference>
<dbReference type="PANTHER" id="PTHR21299">
    <property type="entry name" value="CYTIDYLATE KINASE/PANTOATE-BETA-ALANINE LIGASE"/>
    <property type="match status" value="1"/>
</dbReference>
<dbReference type="PANTHER" id="PTHR21299:SF1">
    <property type="entry name" value="PANTOATE--BETA-ALANINE LIGASE"/>
    <property type="match status" value="1"/>
</dbReference>
<dbReference type="Pfam" id="PF02569">
    <property type="entry name" value="Pantoate_ligase"/>
    <property type="match status" value="1"/>
</dbReference>
<dbReference type="SUPFAM" id="SSF52374">
    <property type="entry name" value="Nucleotidylyl transferase"/>
    <property type="match status" value="1"/>
</dbReference>
<proteinExistence type="inferred from homology"/>
<keyword id="KW-0067">ATP-binding</keyword>
<keyword id="KW-0963">Cytoplasm</keyword>
<keyword id="KW-0436">Ligase</keyword>
<keyword id="KW-0547">Nucleotide-binding</keyword>
<keyword id="KW-0566">Pantothenate biosynthesis</keyword>
<protein>
    <recommendedName>
        <fullName evidence="1">Pantothenate synthetase</fullName>
        <shortName evidence="1">PS</shortName>
        <ecNumber evidence="1">6.3.2.1</ecNumber>
    </recommendedName>
    <alternativeName>
        <fullName evidence="1">Pantoate--beta-alanine ligase</fullName>
    </alternativeName>
    <alternativeName>
        <fullName evidence="1">Pantoate-activating enzyme</fullName>
    </alternativeName>
</protein>
<accession>B3EH07</accession>
<reference key="1">
    <citation type="submission" date="2008-05" db="EMBL/GenBank/DDBJ databases">
        <title>Complete sequence of Chlorobium limicola DSM 245.</title>
        <authorList>
            <consortium name="US DOE Joint Genome Institute"/>
            <person name="Lucas S."/>
            <person name="Copeland A."/>
            <person name="Lapidus A."/>
            <person name="Glavina del Rio T."/>
            <person name="Dalin E."/>
            <person name="Tice H."/>
            <person name="Bruce D."/>
            <person name="Goodwin L."/>
            <person name="Pitluck S."/>
            <person name="Schmutz J."/>
            <person name="Larimer F."/>
            <person name="Land M."/>
            <person name="Hauser L."/>
            <person name="Kyrpides N."/>
            <person name="Ovchinnikova G."/>
            <person name="Zhao F."/>
            <person name="Li T."/>
            <person name="Liu Z."/>
            <person name="Overmann J."/>
            <person name="Bryant D.A."/>
            <person name="Richardson P."/>
        </authorList>
    </citation>
    <scope>NUCLEOTIDE SEQUENCE [LARGE SCALE GENOMIC DNA]</scope>
    <source>
        <strain>DSM 245 / NBRC 103803 / 6330</strain>
    </source>
</reference>
<sequence>MQIITEPCQMQAVVEKLRLNRQLIGVVMTMGALHEGHLSLIKQARSLAGTVILTIFVNPKQFGPDEDFHRYPRPFELDASHAKAAGVDYLFAPSPEAIYPEGFQTTVQTGAVAEGLEGMKRPGHFNGVATVVTKLLLITKPHIALFGEKDAQQLAVINRLVRDLNLDVRIIGAPIVREENGLAVSSRNIYLSKEQRESATVLFRGILHAEKELAAGRTDLAGIAGEIERMIAGEPECRPDYVCFVHDNDFMTAETAEPAGEYRLLIAAYAGTVRLIDNRRFTT</sequence>